<sequence>MGKITFYEDRGFQGHCYQCSSNNCLQQPYFSRCNSIRVDVHSWFVYQRPDYRGHQYMLQRGNYPQYGQWMGFDDSIRSCRLIPQHTGTFRMRIYERDDFRGQMSEITDDCPSLQDRFHLTEVNSVRVLEGSWVIYEMPSYRGRQYLLRPGEYRRYLDWGAMNAKVGSLRRVMDFY</sequence>
<keyword id="KW-0903">Direct protein sequencing</keyword>
<keyword id="KW-0273">Eye lens protein</keyword>
<keyword id="KW-1185">Reference proteome</keyword>
<keyword id="KW-0677">Repeat</keyword>
<reference key="1">
    <citation type="journal article" date="1972" name="Biochem. J.">
        <title>The amino acid sequence of gamma-crystallin (fraction II) from calf lens.</title>
        <authorList>
            <person name="Croft L.R."/>
        </authorList>
    </citation>
    <scope>PROTEIN SEQUENCE OF 2-175</scope>
</reference>
<organism>
    <name type="scientific">Bos taurus</name>
    <name type="common">Bovine</name>
    <dbReference type="NCBI Taxonomy" id="9913"/>
    <lineage>
        <taxon>Eukaryota</taxon>
        <taxon>Metazoa</taxon>
        <taxon>Chordata</taxon>
        <taxon>Craniata</taxon>
        <taxon>Vertebrata</taxon>
        <taxon>Euteleostomi</taxon>
        <taxon>Mammalia</taxon>
        <taxon>Eutheria</taxon>
        <taxon>Laurasiatheria</taxon>
        <taxon>Artiodactyla</taxon>
        <taxon>Ruminantia</taxon>
        <taxon>Pecora</taxon>
        <taxon>Bovidae</taxon>
        <taxon>Bovinae</taxon>
        <taxon>Bos</taxon>
    </lineage>
</organism>
<name>CRGA_BOVIN</name>
<dbReference type="SMR" id="P02527"/>
<dbReference type="InParanoid" id="P02527"/>
<dbReference type="Proteomes" id="UP000009136">
    <property type="component" value="Unplaced"/>
</dbReference>
<dbReference type="GO" id="GO:0005212">
    <property type="term" value="F:structural constituent of eye lens"/>
    <property type="evidence" value="ECO:0000318"/>
    <property type="project" value="GO_Central"/>
</dbReference>
<dbReference type="GO" id="GO:0002088">
    <property type="term" value="P:lens development in camera-type eye"/>
    <property type="evidence" value="ECO:0000318"/>
    <property type="project" value="GO_Central"/>
</dbReference>
<dbReference type="GO" id="GO:0007601">
    <property type="term" value="P:visual perception"/>
    <property type="evidence" value="ECO:0000318"/>
    <property type="project" value="GO_Central"/>
</dbReference>
<dbReference type="FunFam" id="2.60.20.10:FF:000001">
    <property type="entry name" value="Crystallin gamma S"/>
    <property type="match status" value="1"/>
</dbReference>
<dbReference type="FunFam" id="2.60.20.10:FF:000003">
    <property type="entry name" value="Crystallin gamma S"/>
    <property type="match status" value="1"/>
</dbReference>
<dbReference type="Gene3D" id="2.60.20.10">
    <property type="entry name" value="Crystallins"/>
    <property type="match status" value="2"/>
</dbReference>
<dbReference type="InterPro" id="IPR050252">
    <property type="entry name" value="Beta/Gamma-Crystallin"/>
</dbReference>
<dbReference type="InterPro" id="IPR001064">
    <property type="entry name" value="Beta/gamma_crystallin"/>
</dbReference>
<dbReference type="InterPro" id="IPR011024">
    <property type="entry name" value="G_crystallin-like"/>
</dbReference>
<dbReference type="PANTHER" id="PTHR11818">
    <property type="entry name" value="BETA/GAMMA CRYSTALLIN"/>
    <property type="match status" value="1"/>
</dbReference>
<dbReference type="PANTHER" id="PTHR11818:SF101">
    <property type="entry name" value="GAMMA-CRYSTALLIN B"/>
    <property type="match status" value="1"/>
</dbReference>
<dbReference type="Pfam" id="PF00030">
    <property type="entry name" value="Crystall"/>
    <property type="match status" value="2"/>
</dbReference>
<dbReference type="PRINTS" id="PR01367">
    <property type="entry name" value="BGCRYSTALLIN"/>
</dbReference>
<dbReference type="SMART" id="SM00247">
    <property type="entry name" value="XTALbg"/>
    <property type="match status" value="2"/>
</dbReference>
<dbReference type="SUPFAM" id="SSF49695">
    <property type="entry name" value="gamma-Crystallin-like"/>
    <property type="match status" value="1"/>
</dbReference>
<dbReference type="PROSITE" id="PS50915">
    <property type="entry name" value="CRYSTALLIN_BETA_GAMMA"/>
    <property type="match status" value="4"/>
</dbReference>
<evidence type="ECO:0000255" key="1">
    <source>
        <dbReference type="PROSITE-ProRule" id="PRU00028"/>
    </source>
</evidence>
<evidence type="ECO:0000269" key="2">
    <source>
    </source>
</evidence>
<evidence type="ECO:0000305" key="3"/>
<comment type="function">
    <text>Crystallins are the dominant structural components of the vertebrate eye lens.</text>
</comment>
<comment type="domain">
    <text>Has a two-domain beta-structure, folded into four very similar Greek key motifs.</text>
</comment>
<comment type="similarity">
    <text evidence="3">Belongs to the beta/gamma-crystallin family.</text>
</comment>
<accession>P02527</accession>
<gene>
    <name type="primary">CRYGA</name>
</gene>
<proteinExistence type="evidence at protein level"/>
<feature type="initiator methionine" description="Removed" evidence="2">
    <location>
        <position position="1"/>
    </location>
</feature>
<feature type="chain" id="PRO_0000057580" description="Gamma-crystallin A">
    <location>
        <begin position="2"/>
        <end position="175"/>
    </location>
</feature>
<feature type="domain" description="Beta/gamma crystallin 'Greek key' 1" evidence="1">
    <location>
        <begin position="2"/>
        <end position="40"/>
    </location>
</feature>
<feature type="domain" description="Beta/gamma crystallin 'Greek key' 2" evidence="1">
    <location>
        <begin position="41"/>
        <end position="83"/>
    </location>
</feature>
<feature type="domain" description="Beta/gamma crystallin 'Greek key' 3" evidence="1">
    <location>
        <begin position="89"/>
        <end position="129"/>
    </location>
</feature>
<feature type="domain" description="Beta/gamma crystallin 'Greek key' 4" evidence="1">
    <location>
        <begin position="130"/>
        <end position="172"/>
    </location>
</feature>
<feature type="region of interest" description="Connecting peptide">
    <location>
        <begin position="84"/>
        <end position="88"/>
    </location>
</feature>
<protein>
    <recommendedName>
        <fullName>Gamma-crystallin A</fullName>
    </recommendedName>
    <alternativeName>
        <fullName>Gamma-A-crystallin</fullName>
    </alternativeName>
    <alternativeName>
        <fullName>Gamma-crystallin IVB</fullName>
    </alternativeName>
</protein>